<reference key="1">
    <citation type="journal article" date="2006" name="Proc. Natl. Acad. Sci. U.S.A.">
        <title>Comparative genomics of the lactic acid bacteria.</title>
        <authorList>
            <person name="Makarova K.S."/>
            <person name="Slesarev A."/>
            <person name="Wolf Y.I."/>
            <person name="Sorokin A."/>
            <person name="Mirkin B."/>
            <person name="Koonin E.V."/>
            <person name="Pavlov A."/>
            <person name="Pavlova N."/>
            <person name="Karamychev V."/>
            <person name="Polouchine N."/>
            <person name="Shakhova V."/>
            <person name="Grigoriev I."/>
            <person name="Lou Y."/>
            <person name="Rohksar D."/>
            <person name="Lucas S."/>
            <person name="Huang K."/>
            <person name="Goodstein D.M."/>
            <person name="Hawkins T."/>
            <person name="Plengvidhya V."/>
            <person name="Welker D."/>
            <person name="Hughes J."/>
            <person name="Goh Y."/>
            <person name="Benson A."/>
            <person name="Baldwin K."/>
            <person name="Lee J.-H."/>
            <person name="Diaz-Muniz I."/>
            <person name="Dosti B."/>
            <person name="Smeianov V."/>
            <person name="Wechter W."/>
            <person name="Barabote R."/>
            <person name="Lorca G."/>
            <person name="Altermann E."/>
            <person name="Barrangou R."/>
            <person name="Ganesan B."/>
            <person name="Xie Y."/>
            <person name="Rawsthorne H."/>
            <person name="Tamir D."/>
            <person name="Parker C."/>
            <person name="Breidt F."/>
            <person name="Broadbent J.R."/>
            <person name="Hutkins R."/>
            <person name="O'Sullivan D."/>
            <person name="Steele J."/>
            <person name="Unlu G."/>
            <person name="Saier M.H. Jr."/>
            <person name="Klaenhammer T."/>
            <person name="Richardson P."/>
            <person name="Kozyavkin S."/>
            <person name="Weimer B.C."/>
            <person name="Mills D.A."/>
        </authorList>
    </citation>
    <scope>NUCLEOTIDE SEQUENCE [LARGE SCALE GENOMIC DNA]</scope>
    <source>
        <strain>SK11</strain>
    </source>
</reference>
<keyword id="KW-0678">Repressor</keyword>
<keyword id="KW-0687">Ribonucleoprotein</keyword>
<keyword id="KW-0689">Ribosomal protein</keyword>
<keyword id="KW-0694">RNA-binding</keyword>
<keyword id="KW-0699">rRNA-binding</keyword>
<keyword id="KW-0810">Translation regulation</keyword>
<keyword id="KW-0820">tRNA-binding</keyword>
<accession>Q02WD3</accession>
<protein>
    <recommendedName>
        <fullName evidence="1">Large ribosomal subunit protein uL1</fullName>
    </recommendedName>
    <alternativeName>
        <fullName evidence="2">50S ribosomal protein L1</fullName>
    </alternativeName>
</protein>
<gene>
    <name evidence="1" type="primary">rplA</name>
    <name type="ordered locus">LACR_2283</name>
</gene>
<organism>
    <name type="scientific">Lactococcus lactis subsp. cremoris (strain SK11)</name>
    <dbReference type="NCBI Taxonomy" id="272622"/>
    <lineage>
        <taxon>Bacteria</taxon>
        <taxon>Bacillati</taxon>
        <taxon>Bacillota</taxon>
        <taxon>Bacilli</taxon>
        <taxon>Lactobacillales</taxon>
        <taxon>Streptococcaceae</taxon>
        <taxon>Lactococcus</taxon>
        <taxon>Lactococcus cremoris subsp. cremoris</taxon>
    </lineage>
</organism>
<name>RL1_LACLS</name>
<feature type="chain" id="PRO_0000308034" description="Large ribosomal subunit protein uL1">
    <location>
        <begin position="1"/>
        <end position="229"/>
    </location>
</feature>
<sequence>MAKKSKALRAAIEKIDATKAYSVEEAVALAKETSFAKFDATVEVAYNLNIDVKKSDQQIRGAMVLPNGTGKTARVLVFAKGAKAEEATAAGADFVGSDELVAKINGGWLDFDVVIATPDMMAVVGRLGRVLGPRNLMPNPKTGTVTMDVTKAVGESKAGKVNYRADKAGNVHVPIGKVSFDTEKLVENFKALNTVIAAAKPAASKGAYITNLSVTTTMGPGVKVDSASF</sequence>
<proteinExistence type="inferred from homology"/>
<dbReference type="EMBL" id="CP000425">
    <property type="protein sequence ID" value="ABJ73739.1"/>
    <property type="molecule type" value="Genomic_DNA"/>
</dbReference>
<dbReference type="RefSeq" id="WP_011677073.1">
    <property type="nucleotide sequence ID" value="NC_008527.1"/>
</dbReference>
<dbReference type="SMR" id="Q02WD3"/>
<dbReference type="GeneID" id="61110326"/>
<dbReference type="KEGG" id="llc:LACR_2283"/>
<dbReference type="HOGENOM" id="CLU_062853_0_0_9"/>
<dbReference type="Proteomes" id="UP000000240">
    <property type="component" value="Chromosome"/>
</dbReference>
<dbReference type="GO" id="GO:0015934">
    <property type="term" value="C:large ribosomal subunit"/>
    <property type="evidence" value="ECO:0007669"/>
    <property type="project" value="InterPro"/>
</dbReference>
<dbReference type="GO" id="GO:0019843">
    <property type="term" value="F:rRNA binding"/>
    <property type="evidence" value="ECO:0007669"/>
    <property type="project" value="UniProtKB-UniRule"/>
</dbReference>
<dbReference type="GO" id="GO:0003735">
    <property type="term" value="F:structural constituent of ribosome"/>
    <property type="evidence" value="ECO:0007669"/>
    <property type="project" value="InterPro"/>
</dbReference>
<dbReference type="GO" id="GO:0000049">
    <property type="term" value="F:tRNA binding"/>
    <property type="evidence" value="ECO:0007669"/>
    <property type="project" value="UniProtKB-KW"/>
</dbReference>
<dbReference type="GO" id="GO:0006417">
    <property type="term" value="P:regulation of translation"/>
    <property type="evidence" value="ECO:0007669"/>
    <property type="project" value="UniProtKB-KW"/>
</dbReference>
<dbReference type="GO" id="GO:0006412">
    <property type="term" value="P:translation"/>
    <property type="evidence" value="ECO:0007669"/>
    <property type="project" value="UniProtKB-UniRule"/>
</dbReference>
<dbReference type="CDD" id="cd00403">
    <property type="entry name" value="Ribosomal_L1"/>
    <property type="match status" value="1"/>
</dbReference>
<dbReference type="FunFam" id="3.40.50.790:FF:000001">
    <property type="entry name" value="50S ribosomal protein L1"/>
    <property type="match status" value="1"/>
</dbReference>
<dbReference type="Gene3D" id="3.30.190.20">
    <property type="match status" value="1"/>
</dbReference>
<dbReference type="Gene3D" id="3.40.50.790">
    <property type="match status" value="1"/>
</dbReference>
<dbReference type="HAMAP" id="MF_01318_B">
    <property type="entry name" value="Ribosomal_uL1_B"/>
    <property type="match status" value="1"/>
</dbReference>
<dbReference type="InterPro" id="IPR005878">
    <property type="entry name" value="Ribosom_uL1_bac-type"/>
</dbReference>
<dbReference type="InterPro" id="IPR002143">
    <property type="entry name" value="Ribosomal_uL1"/>
</dbReference>
<dbReference type="InterPro" id="IPR023674">
    <property type="entry name" value="Ribosomal_uL1-like"/>
</dbReference>
<dbReference type="InterPro" id="IPR028364">
    <property type="entry name" value="Ribosomal_uL1/biogenesis"/>
</dbReference>
<dbReference type="InterPro" id="IPR016095">
    <property type="entry name" value="Ribosomal_uL1_3-a/b-sand"/>
</dbReference>
<dbReference type="InterPro" id="IPR023673">
    <property type="entry name" value="Ribosomal_uL1_CS"/>
</dbReference>
<dbReference type="NCBIfam" id="TIGR01169">
    <property type="entry name" value="rplA_bact"/>
    <property type="match status" value="1"/>
</dbReference>
<dbReference type="PANTHER" id="PTHR36427">
    <property type="entry name" value="54S RIBOSOMAL PROTEIN L1, MITOCHONDRIAL"/>
    <property type="match status" value="1"/>
</dbReference>
<dbReference type="PANTHER" id="PTHR36427:SF3">
    <property type="entry name" value="LARGE RIBOSOMAL SUBUNIT PROTEIN UL1M"/>
    <property type="match status" value="1"/>
</dbReference>
<dbReference type="Pfam" id="PF00687">
    <property type="entry name" value="Ribosomal_L1"/>
    <property type="match status" value="1"/>
</dbReference>
<dbReference type="PIRSF" id="PIRSF002155">
    <property type="entry name" value="Ribosomal_L1"/>
    <property type="match status" value="1"/>
</dbReference>
<dbReference type="SUPFAM" id="SSF56808">
    <property type="entry name" value="Ribosomal protein L1"/>
    <property type="match status" value="1"/>
</dbReference>
<dbReference type="PROSITE" id="PS01199">
    <property type="entry name" value="RIBOSOMAL_L1"/>
    <property type="match status" value="1"/>
</dbReference>
<comment type="function">
    <text evidence="1">Binds directly to 23S rRNA. The L1 stalk is quite mobile in the ribosome, and is involved in E site tRNA release.</text>
</comment>
<comment type="function">
    <text evidence="1">Protein L1 is also a translational repressor protein, it controls the translation of the L11 operon by binding to its mRNA.</text>
</comment>
<comment type="subunit">
    <text evidence="1">Part of the 50S ribosomal subunit.</text>
</comment>
<comment type="similarity">
    <text evidence="1">Belongs to the universal ribosomal protein uL1 family.</text>
</comment>
<evidence type="ECO:0000255" key="1">
    <source>
        <dbReference type="HAMAP-Rule" id="MF_01318"/>
    </source>
</evidence>
<evidence type="ECO:0000305" key="2"/>